<organism>
    <name type="scientific">Homo sapiens</name>
    <name type="common">Human</name>
    <dbReference type="NCBI Taxonomy" id="9606"/>
    <lineage>
        <taxon>Eukaryota</taxon>
        <taxon>Metazoa</taxon>
        <taxon>Chordata</taxon>
        <taxon>Craniata</taxon>
        <taxon>Vertebrata</taxon>
        <taxon>Euteleostomi</taxon>
        <taxon>Mammalia</taxon>
        <taxon>Eutheria</taxon>
        <taxon>Euarchontoglires</taxon>
        <taxon>Primates</taxon>
        <taxon>Haplorrhini</taxon>
        <taxon>Catarrhini</taxon>
        <taxon>Hominidae</taxon>
        <taxon>Homo</taxon>
    </lineage>
</organism>
<protein>
    <recommendedName>
        <fullName>Ankyrin repeat and SOCS box protein 14</fullName>
        <shortName>ASB-14</shortName>
    </recommendedName>
</protein>
<accession>A6NK59</accession>
<accession>C9JX97</accession>
<accession>Q8WXK2</accession>
<accession>Q92816</accession>
<keyword id="KW-0025">Alternative splicing</keyword>
<keyword id="KW-0040">ANK repeat</keyword>
<keyword id="KW-1267">Proteomics identification</keyword>
<keyword id="KW-1185">Reference proteome</keyword>
<keyword id="KW-0677">Repeat</keyword>
<name>ASB14_HUMAN</name>
<gene>
    <name type="primary">ASB14</name>
</gene>
<sequence>MDNYTSDEDIDEDFDTQLIIQQSLQDIYKPGTAQHAPKDESLHSFLSADYKKIVETIEKVGKEDALSHLTKYHSAFGEADEIGWIPLHKAAVQLNRKILEITLSASDPSLWEQTTHNGETPLFLAVSSCLLENATFLLLNGCNPNAKNFEGNSPLLAAVLRDCYDMAALLINYGADVNLRCANERTALHEAAKLGREDMVKLMLVSGAHPDPQSTYGFTPLALAAQSGHTEIMEMLLRKGKIFCLASDSSSILLEAASGGNPDAVALLLEYGADANIPKNSGHLPIHVAADRGHLLALKILIPVTDLAAIKQSGISPVHCAAAGAHPQCLELLIQAGFDVNFMLDQRINKHYDDHRKSALYFAVSNSDLSSVKLLLSAGALPNQDPVNCLQIALRMGNYELISLLLRHGANVNYFCRVNPLHFPSALQYTLKDEVMLRMLLNYGYDTERCFDCPHGDKVHPSYTVEGWTSTVIKDTKFCEVITLSWLQHLSGKVVRVMLDYVDQVRICSKLKAVLQKQGIWSEIHFILTNPRSLKHLCRLKIRKCMGRLHLRCPVFMSFLPLPNRLKAYVLYKEYDLYGQGIFTGTW</sequence>
<comment type="function">
    <text evidence="2">May be a substrate-recognition component of a SCF-like ECS (Elongin-Cullin-SOCS-box protein) E3 ubiquitin-protein ligase complex which mediates the ubiquitination and subsequent proteasomal degradation of target proteins. Plays a role in the inhibition of cardiomyocyte nuclear proliferation by mediating the ubiquitination and degradation of MAPRE2.</text>
</comment>
<comment type="pathway">
    <text>Protein modification; protein ubiquitination.</text>
</comment>
<comment type="subunit">
    <text evidence="2">Interacts with MAPRE2; this interaction promotes MAPRE2 degradation.</text>
</comment>
<comment type="alternative products">
    <event type="alternative splicing"/>
    <isoform>
        <id>A6NK59-1</id>
        <name>1</name>
        <sequence type="displayed"/>
    </isoform>
    <isoform>
        <id>A6NK59-2</id>
        <name>2</name>
        <sequence type="described" ref="VSP_036925 VSP_036926"/>
    </isoform>
    <isoform>
        <id>A6NK59-3</id>
        <name>3</name>
        <sequence type="described" ref="VSP_046197 VSP_046198"/>
    </isoform>
</comment>
<comment type="domain">
    <text evidence="1">The SOCS box domain mediates the interaction with the Elongin BC complex, an adapter module in different E3 ubiquitin-protein ligase complexes.</text>
</comment>
<comment type="similarity">
    <text evidence="6">Belongs to the ankyrin SOCS box (ASB) family.</text>
</comment>
<comment type="caution">
    <text evidence="6">Was originally derived from a readthrough transcript including ASB14 and DNAH12.</text>
</comment>
<reference key="1">
    <citation type="submission" date="2001-07" db="EMBL/GenBank/DDBJ databases">
        <title>SOCS box proteins.</title>
        <authorList>
            <person name="Kile B.T."/>
            <person name="Nicola N.A."/>
        </authorList>
    </citation>
    <scope>NUCLEOTIDE SEQUENCE [MRNA] (ISOFORM 2)</scope>
</reference>
<reference key="2">
    <citation type="journal article" date="2007" name="BMC Genomics">
        <title>The full-ORF clone resource of the German cDNA consortium.</title>
        <authorList>
            <person name="Bechtel S."/>
            <person name="Rosenfelder H."/>
            <person name="Duda A."/>
            <person name="Schmidt C.P."/>
            <person name="Ernst U."/>
            <person name="Wellenreuther R."/>
            <person name="Mehrle A."/>
            <person name="Schuster C."/>
            <person name="Bahr A."/>
            <person name="Bloecker H."/>
            <person name="Heubner D."/>
            <person name="Hoerlein A."/>
            <person name="Michel G."/>
            <person name="Wedler H."/>
            <person name="Koehrer K."/>
            <person name="Ottenwaelder B."/>
            <person name="Poustka A."/>
            <person name="Wiemann S."/>
            <person name="Schupp I."/>
        </authorList>
    </citation>
    <scope>NUCLEOTIDE SEQUENCE [LARGE SCALE MRNA] (ISOFORM 3)</scope>
    <source>
        <tissue>Adipocyte</tissue>
    </source>
</reference>
<reference key="3">
    <citation type="journal article" date="2006" name="Nature">
        <title>The DNA sequence, annotation and analysis of human chromosome 3.</title>
        <authorList>
            <person name="Muzny D.M."/>
            <person name="Scherer S.E."/>
            <person name="Kaul R."/>
            <person name="Wang J."/>
            <person name="Yu J."/>
            <person name="Sudbrak R."/>
            <person name="Buhay C.J."/>
            <person name="Chen R."/>
            <person name="Cree A."/>
            <person name="Ding Y."/>
            <person name="Dugan-Rocha S."/>
            <person name="Gill R."/>
            <person name="Gunaratne P."/>
            <person name="Harris R.A."/>
            <person name="Hawes A.C."/>
            <person name="Hernandez J."/>
            <person name="Hodgson A.V."/>
            <person name="Hume J."/>
            <person name="Jackson A."/>
            <person name="Khan Z.M."/>
            <person name="Kovar-Smith C."/>
            <person name="Lewis L.R."/>
            <person name="Lozado R.J."/>
            <person name="Metzker M.L."/>
            <person name="Milosavljevic A."/>
            <person name="Miner G.R."/>
            <person name="Morgan M.B."/>
            <person name="Nazareth L.V."/>
            <person name="Scott G."/>
            <person name="Sodergren E."/>
            <person name="Song X.-Z."/>
            <person name="Steffen D."/>
            <person name="Wei S."/>
            <person name="Wheeler D.A."/>
            <person name="Wright M.W."/>
            <person name="Worley K.C."/>
            <person name="Yuan Y."/>
            <person name="Zhang Z."/>
            <person name="Adams C.Q."/>
            <person name="Ansari-Lari M.A."/>
            <person name="Ayele M."/>
            <person name="Brown M.J."/>
            <person name="Chen G."/>
            <person name="Chen Z."/>
            <person name="Clendenning J."/>
            <person name="Clerc-Blankenburg K.P."/>
            <person name="Chen R."/>
            <person name="Chen Z."/>
            <person name="Davis C."/>
            <person name="Delgado O."/>
            <person name="Dinh H.H."/>
            <person name="Dong W."/>
            <person name="Draper H."/>
            <person name="Ernst S."/>
            <person name="Fu G."/>
            <person name="Gonzalez-Garay M.L."/>
            <person name="Garcia D.K."/>
            <person name="Gillett W."/>
            <person name="Gu J."/>
            <person name="Hao B."/>
            <person name="Haugen E."/>
            <person name="Havlak P."/>
            <person name="He X."/>
            <person name="Hennig S."/>
            <person name="Hu S."/>
            <person name="Huang W."/>
            <person name="Jackson L.R."/>
            <person name="Jacob L.S."/>
            <person name="Kelly S.H."/>
            <person name="Kube M."/>
            <person name="Levy R."/>
            <person name="Li Z."/>
            <person name="Liu B."/>
            <person name="Liu J."/>
            <person name="Liu W."/>
            <person name="Lu J."/>
            <person name="Maheshwari M."/>
            <person name="Nguyen B.-V."/>
            <person name="Okwuonu G.O."/>
            <person name="Palmeiri A."/>
            <person name="Pasternak S."/>
            <person name="Perez L.M."/>
            <person name="Phelps K.A."/>
            <person name="Plopper F.J."/>
            <person name="Qiang B."/>
            <person name="Raymond C."/>
            <person name="Rodriguez R."/>
            <person name="Saenphimmachak C."/>
            <person name="Santibanez J."/>
            <person name="Shen H."/>
            <person name="Shen Y."/>
            <person name="Subramanian S."/>
            <person name="Tabor P.E."/>
            <person name="Verduzco D."/>
            <person name="Waldron L."/>
            <person name="Wang J."/>
            <person name="Wang J."/>
            <person name="Wang Q."/>
            <person name="Williams G.A."/>
            <person name="Wong G.K.-S."/>
            <person name="Yao Z."/>
            <person name="Zhang J."/>
            <person name="Zhang X."/>
            <person name="Zhao G."/>
            <person name="Zhou J."/>
            <person name="Zhou Y."/>
            <person name="Nelson D."/>
            <person name="Lehrach H."/>
            <person name="Reinhardt R."/>
            <person name="Naylor S.L."/>
            <person name="Yang H."/>
            <person name="Olson M."/>
            <person name="Weinstock G."/>
            <person name="Gibbs R.A."/>
        </authorList>
    </citation>
    <scope>NUCLEOTIDE SEQUENCE [LARGE SCALE GENOMIC DNA]</scope>
</reference>
<dbReference type="EMBL" id="AF403032">
    <property type="protein sequence ID" value="AAL57351.1"/>
    <property type="molecule type" value="mRNA"/>
</dbReference>
<dbReference type="EMBL" id="AL832472">
    <property type="status" value="NOT_ANNOTATED_CDS"/>
    <property type="molecule type" value="mRNA"/>
</dbReference>
<dbReference type="EMBL" id="AC093928">
    <property type="status" value="NOT_ANNOTATED_CDS"/>
    <property type="molecule type" value="Genomic_DNA"/>
</dbReference>
<dbReference type="CCDS" id="CCDS46856.2">
    <molecule id="A6NK59-3"/>
</dbReference>
<dbReference type="RefSeq" id="NP_001136205.2">
    <molecule id="A6NK59-3"/>
    <property type="nucleotide sequence ID" value="NM_001142733.3"/>
</dbReference>
<dbReference type="RefSeq" id="NP_569058.1">
    <molecule id="A6NK59-2"/>
    <property type="nucleotide sequence ID" value="NM_130387.5"/>
</dbReference>
<dbReference type="RefSeq" id="XP_016861225.1">
    <molecule id="A6NK59-3"/>
    <property type="nucleotide sequence ID" value="XM_017005736.3"/>
</dbReference>
<dbReference type="RefSeq" id="XP_016861226.1">
    <molecule id="A6NK59-3"/>
    <property type="nucleotide sequence ID" value="XM_017005737.3"/>
</dbReference>
<dbReference type="RefSeq" id="XP_054201283.1">
    <molecule id="A6NK59-3"/>
    <property type="nucleotide sequence ID" value="XM_054345308.1"/>
</dbReference>
<dbReference type="RefSeq" id="XP_054201284.1">
    <molecule id="A6NK59-3"/>
    <property type="nucleotide sequence ID" value="XM_054345309.1"/>
</dbReference>
<dbReference type="SMR" id="A6NK59"/>
<dbReference type="BioGRID" id="126775">
    <property type="interactions" value="57"/>
</dbReference>
<dbReference type="FunCoup" id="A6NK59">
    <property type="interactions" value="51"/>
</dbReference>
<dbReference type="IntAct" id="A6NK59">
    <property type="interactions" value="29"/>
</dbReference>
<dbReference type="STRING" id="9606.ENSP00000419199"/>
<dbReference type="iPTMnet" id="A6NK59"/>
<dbReference type="PhosphoSitePlus" id="A6NK59"/>
<dbReference type="BioMuta" id="ASB14"/>
<dbReference type="MassIVE" id="A6NK59"/>
<dbReference type="PaxDb" id="9606-ENSP00000419199"/>
<dbReference type="PeptideAtlas" id="A6NK59"/>
<dbReference type="ProteomicsDB" id="12092"/>
<dbReference type="ProteomicsDB" id="1380">
    <molecule id="A6NK59-1"/>
</dbReference>
<dbReference type="ProteomicsDB" id="1381">
    <molecule id="A6NK59-2"/>
</dbReference>
<dbReference type="Antibodypedia" id="56010">
    <property type="antibodies" value="19 antibodies from 11 providers"/>
</dbReference>
<dbReference type="DNASU" id="142686"/>
<dbReference type="Ensembl" id="ENST00000487349.6">
    <molecule id="A6NK59-3"/>
    <property type="protein sequence ID" value="ENSP00000419199.1"/>
    <property type="gene ID" value="ENSG00000239388.10"/>
</dbReference>
<dbReference type="GeneID" id="142686"/>
<dbReference type="KEGG" id="hsa:142686"/>
<dbReference type="MANE-Select" id="ENST00000487349.6">
    <molecule id="A6NK59-3"/>
    <property type="protein sequence ID" value="ENSP00000419199.1"/>
    <property type="RefSeq nucleotide sequence ID" value="NM_001142733.3"/>
    <property type="RefSeq protein sequence ID" value="NP_001136205.2"/>
</dbReference>
<dbReference type="UCSC" id="uc062kwt.1">
    <molecule id="A6NK59-1"/>
    <property type="organism name" value="human"/>
</dbReference>
<dbReference type="AGR" id="HGNC:19766"/>
<dbReference type="CTD" id="142686"/>
<dbReference type="DisGeNET" id="142686"/>
<dbReference type="GeneCards" id="ASB14"/>
<dbReference type="HGNC" id="HGNC:19766">
    <property type="gene designation" value="ASB14"/>
</dbReference>
<dbReference type="HPA" id="ENSG00000239388">
    <property type="expression patterns" value="Group enriched (skeletal muscle, tongue)"/>
</dbReference>
<dbReference type="neXtProt" id="NX_A6NK59"/>
<dbReference type="OpenTargets" id="ENSG00000239388"/>
<dbReference type="PharmGKB" id="PA134983884"/>
<dbReference type="VEuPathDB" id="HostDB:ENSG00000239388"/>
<dbReference type="eggNOG" id="KOG0504">
    <property type="taxonomic scope" value="Eukaryota"/>
</dbReference>
<dbReference type="GeneTree" id="ENSGT00940000156550"/>
<dbReference type="HOGENOM" id="CLU_023739_1_0_1"/>
<dbReference type="InParanoid" id="A6NK59"/>
<dbReference type="OMA" id="GQENFTG"/>
<dbReference type="OrthoDB" id="194358at2759"/>
<dbReference type="PAN-GO" id="A6NK59">
    <property type="GO annotations" value="0 GO annotations based on evolutionary models"/>
</dbReference>
<dbReference type="PhylomeDB" id="A6NK59"/>
<dbReference type="TreeFam" id="TF315127"/>
<dbReference type="PathwayCommons" id="A6NK59"/>
<dbReference type="Reactome" id="R-HSA-8951664">
    <property type="pathway name" value="Neddylation"/>
</dbReference>
<dbReference type="Reactome" id="R-HSA-983168">
    <property type="pathway name" value="Antigen processing: Ubiquitination &amp; Proteasome degradation"/>
</dbReference>
<dbReference type="SignaLink" id="A6NK59"/>
<dbReference type="UniPathway" id="UPA00143"/>
<dbReference type="BioGRID-ORCS" id="142686">
    <property type="hits" value="10 hits in 1185 CRISPR screens"/>
</dbReference>
<dbReference type="GenomeRNAi" id="142686"/>
<dbReference type="Pharos" id="A6NK59">
    <property type="development level" value="Tdark"/>
</dbReference>
<dbReference type="PRO" id="PR:A6NK59"/>
<dbReference type="Proteomes" id="UP000005640">
    <property type="component" value="Chromosome 3"/>
</dbReference>
<dbReference type="RNAct" id="A6NK59">
    <property type="molecule type" value="protein"/>
</dbReference>
<dbReference type="Bgee" id="ENSG00000239388">
    <property type="expression patterns" value="Expressed in primordial germ cell in gonad and 98 other cell types or tissues"/>
</dbReference>
<dbReference type="GO" id="GO:0005829">
    <property type="term" value="C:cytosol"/>
    <property type="evidence" value="ECO:0000304"/>
    <property type="project" value="Reactome"/>
</dbReference>
<dbReference type="GO" id="GO:0035556">
    <property type="term" value="P:intracellular signal transduction"/>
    <property type="evidence" value="ECO:0007669"/>
    <property type="project" value="InterPro"/>
</dbReference>
<dbReference type="GO" id="GO:0016567">
    <property type="term" value="P:protein ubiquitination"/>
    <property type="evidence" value="ECO:0007669"/>
    <property type="project" value="UniProtKB-UniPathway"/>
</dbReference>
<dbReference type="CDD" id="cd03730">
    <property type="entry name" value="SOCS_ASB14"/>
    <property type="match status" value="1"/>
</dbReference>
<dbReference type="FunFam" id="1.10.750.20:FF:000001">
    <property type="entry name" value="Ankyrin repeat and SOCS box containing 1"/>
    <property type="match status" value="1"/>
</dbReference>
<dbReference type="FunFam" id="1.25.40.20:FF:000267">
    <property type="entry name" value="Ankyrin repeat and SOCS box containing 14"/>
    <property type="match status" value="1"/>
</dbReference>
<dbReference type="FunFam" id="1.25.40.20:FF:000407">
    <property type="entry name" value="Ankyrin repeat and SOCS box containing 14"/>
    <property type="match status" value="1"/>
</dbReference>
<dbReference type="Gene3D" id="1.25.40.20">
    <property type="entry name" value="Ankyrin repeat-containing domain"/>
    <property type="match status" value="3"/>
</dbReference>
<dbReference type="Gene3D" id="1.10.750.20">
    <property type="entry name" value="SOCS box"/>
    <property type="match status" value="1"/>
</dbReference>
<dbReference type="InterPro" id="IPR002110">
    <property type="entry name" value="Ankyrin_rpt"/>
</dbReference>
<dbReference type="InterPro" id="IPR036770">
    <property type="entry name" value="Ankyrin_rpt-contain_sf"/>
</dbReference>
<dbReference type="InterPro" id="IPR001496">
    <property type="entry name" value="SOCS_box"/>
</dbReference>
<dbReference type="InterPro" id="IPR036036">
    <property type="entry name" value="SOCS_box-like_dom_sf"/>
</dbReference>
<dbReference type="PANTHER" id="PTHR24198">
    <property type="entry name" value="ANKYRIN REPEAT AND PROTEIN KINASE DOMAIN-CONTAINING PROTEIN"/>
    <property type="match status" value="1"/>
</dbReference>
<dbReference type="PANTHER" id="PTHR24198:SF176">
    <property type="entry name" value="ANKYRIN REPEAT AND SOCS BOX CONTAINING 14"/>
    <property type="match status" value="1"/>
</dbReference>
<dbReference type="Pfam" id="PF12796">
    <property type="entry name" value="Ank_2"/>
    <property type="match status" value="4"/>
</dbReference>
<dbReference type="Pfam" id="PF07525">
    <property type="entry name" value="SOCS_box"/>
    <property type="match status" value="1"/>
</dbReference>
<dbReference type="PRINTS" id="PR01415">
    <property type="entry name" value="ANKYRIN"/>
</dbReference>
<dbReference type="SMART" id="SM00248">
    <property type="entry name" value="ANK"/>
    <property type="match status" value="11"/>
</dbReference>
<dbReference type="SMART" id="SM00253">
    <property type="entry name" value="SOCS"/>
    <property type="match status" value="1"/>
</dbReference>
<dbReference type="SMART" id="SM00969">
    <property type="entry name" value="SOCS_box"/>
    <property type="match status" value="1"/>
</dbReference>
<dbReference type="SUPFAM" id="SSF48403">
    <property type="entry name" value="Ankyrin repeat"/>
    <property type="match status" value="1"/>
</dbReference>
<dbReference type="SUPFAM" id="SSF158235">
    <property type="entry name" value="SOCS box-like"/>
    <property type="match status" value="1"/>
</dbReference>
<dbReference type="PROSITE" id="PS50297">
    <property type="entry name" value="ANK_REP_REGION"/>
    <property type="match status" value="1"/>
</dbReference>
<dbReference type="PROSITE" id="PS50088">
    <property type="entry name" value="ANK_REPEAT"/>
    <property type="match status" value="7"/>
</dbReference>
<dbReference type="PROSITE" id="PS50225">
    <property type="entry name" value="SOCS"/>
    <property type="match status" value="1"/>
</dbReference>
<feature type="chain" id="PRO_0000066951" description="Ankyrin repeat and SOCS box protein 14">
    <location>
        <begin position="1"/>
        <end position="587"/>
    </location>
</feature>
<feature type="repeat" description="ANK 1">
    <location>
        <begin position="82"/>
        <end position="112"/>
    </location>
</feature>
<feature type="repeat" description="ANK 2">
    <location>
        <begin position="117"/>
        <end position="146"/>
    </location>
</feature>
<feature type="repeat" description="ANK 3">
    <location>
        <begin position="150"/>
        <end position="179"/>
    </location>
</feature>
<feature type="repeat" description="ANK 4">
    <location>
        <begin position="183"/>
        <end position="212"/>
    </location>
</feature>
<feature type="repeat" description="ANK 5">
    <location>
        <begin position="216"/>
        <end position="245"/>
    </location>
</feature>
<feature type="repeat" description="ANK 6">
    <location>
        <begin position="248"/>
        <end position="277"/>
    </location>
</feature>
<feature type="repeat" description="ANK 7">
    <location>
        <begin position="281"/>
        <end position="310"/>
    </location>
</feature>
<feature type="repeat" description="ANK 8">
    <location>
        <begin position="313"/>
        <end position="342"/>
    </location>
</feature>
<feature type="repeat" description="ANK 9">
    <location>
        <begin position="355"/>
        <end position="384"/>
    </location>
</feature>
<feature type="repeat" description="ANK 10">
    <location>
        <begin position="385"/>
        <end position="414"/>
    </location>
</feature>
<feature type="repeat" description="ANK 11">
    <location>
        <begin position="416"/>
        <end position="449"/>
    </location>
</feature>
<feature type="domain" description="SOCS box" evidence="3">
    <location>
        <begin position="521"/>
        <end position="576"/>
    </location>
</feature>
<feature type="splice variant" id="VSP_036925" description="In isoform 2." evidence="5">
    <location>
        <begin position="1"/>
        <end position="285"/>
    </location>
</feature>
<feature type="splice variant" id="VSP_046197" description="In isoform 3." evidence="4">
    <location>
        <position position="60"/>
    </location>
</feature>
<feature type="splice variant" id="VSP_046198" description="In isoform 3." evidence="4">
    <original>KIFCL</original>
    <variation>ANAHGQ</variation>
    <location>
        <begin position="241"/>
        <end position="245"/>
    </location>
</feature>
<feature type="splice variant" id="VSP_036926" description="In isoform 2." evidence="5">
    <original>IHVAADRGHLL</original>
    <variation>MLKCILKFFLR</variation>
    <location>
        <begin position="286"/>
        <end position="296"/>
    </location>
</feature>
<feature type="sequence conflict" description="In Ref. 2; AL832472." evidence="6" ref="2">
    <original>A</original>
    <variation>T</variation>
    <location>
        <position position="410"/>
    </location>
</feature>
<proteinExistence type="evidence at protein level"/>
<evidence type="ECO:0000250" key="1"/>
<evidence type="ECO:0000250" key="2">
    <source>
        <dbReference type="UniProtKB" id="Q8C6Y6"/>
    </source>
</evidence>
<evidence type="ECO:0000255" key="3">
    <source>
        <dbReference type="PROSITE-ProRule" id="PRU00194"/>
    </source>
</evidence>
<evidence type="ECO:0000303" key="4">
    <source>
    </source>
</evidence>
<evidence type="ECO:0000303" key="5">
    <source ref="1"/>
</evidence>
<evidence type="ECO:0000305" key="6"/>